<protein>
    <recommendedName>
        <fullName evidence="1">Glutamyl-tRNA(Gln) amidotransferase subunit A</fullName>
        <shortName evidence="1">Glu-ADT subunit A</shortName>
        <ecNumber evidence="1">6.3.5.7</ecNumber>
    </recommendedName>
</protein>
<name>GATA_HELHP</name>
<reference key="1">
    <citation type="journal article" date="2003" name="Proc. Natl. Acad. Sci. U.S.A.">
        <title>The complete genome sequence of the carcinogenic bacterium Helicobacter hepaticus.</title>
        <authorList>
            <person name="Suerbaum S."/>
            <person name="Josenhans C."/>
            <person name="Sterzenbach T."/>
            <person name="Drescher B."/>
            <person name="Brandt P."/>
            <person name="Bell M."/>
            <person name="Droege M."/>
            <person name="Fartmann B."/>
            <person name="Fischer H.-P."/>
            <person name="Ge Z."/>
            <person name="Hoerster A."/>
            <person name="Holland R."/>
            <person name="Klein K."/>
            <person name="Koenig J."/>
            <person name="Macko L."/>
            <person name="Mendz G.L."/>
            <person name="Nyakatura G."/>
            <person name="Schauer D.B."/>
            <person name="Shen Z."/>
            <person name="Weber J."/>
            <person name="Frosch M."/>
            <person name="Fox J.G."/>
        </authorList>
    </citation>
    <scope>NUCLEOTIDE SEQUENCE [LARGE SCALE GENOMIC DNA]</scope>
    <source>
        <strain>ATCC 51449 / 3B1</strain>
    </source>
</reference>
<sequence>MITLKEALNKSENELKEIKTLLRQRVKENIELNAYIGEINESGSGVPILIKDNINVKGWEITCASKILKGYVSPYNASVITKLHENKMCAFGRANMDEFAMGSTTESSCYGRVKNPLDTSRVPGGSSGGSAAAVAAGLAIASLGSDTGGSIRQPAGFCGCVGLKPSYGRVSRYGLIAYSSSLDQIGPITQNVEDAALLLDAISGYDKQDSTSANLPSLNTFKDLDPNARYKVAILKDFLKDATPQIQEAYNHTIKILESMGHTIVEKSMLDTRYHISAYYIICTAEASSNLARFDGIRYGTRSESKNLKDVYLNTRSAYFGEEVKRRILLGSFVLSSGYYDAYYLKAQQVRKKICADYESIFNECDSILLPIAPSVAPKFGSTHSSLEMYLSDIYTIGVNLAGLPALCMPVSKDKNGLSIGMQFIGAKFKEQNILNIAYGLEKEINN</sequence>
<gene>
    <name evidence="1" type="primary">gatA</name>
    <name type="ordered locus">HH_0701</name>
</gene>
<evidence type="ECO:0000255" key="1">
    <source>
        <dbReference type="HAMAP-Rule" id="MF_00120"/>
    </source>
</evidence>
<keyword id="KW-0067">ATP-binding</keyword>
<keyword id="KW-0436">Ligase</keyword>
<keyword id="KW-0547">Nucleotide-binding</keyword>
<keyword id="KW-0648">Protein biosynthesis</keyword>
<keyword id="KW-1185">Reference proteome</keyword>
<accession>Q7VIA7</accession>
<comment type="function">
    <text evidence="1">Allows the formation of correctly charged Gln-tRNA(Gln) through the transamidation of misacylated Glu-tRNA(Gln) in organisms which lack glutaminyl-tRNA synthetase. The reaction takes place in the presence of glutamine and ATP through an activated gamma-phospho-Glu-tRNA(Gln).</text>
</comment>
<comment type="catalytic activity">
    <reaction evidence="1">
        <text>L-glutamyl-tRNA(Gln) + L-glutamine + ATP + H2O = L-glutaminyl-tRNA(Gln) + L-glutamate + ADP + phosphate + H(+)</text>
        <dbReference type="Rhea" id="RHEA:17521"/>
        <dbReference type="Rhea" id="RHEA-COMP:9681"/>
        <dbReference type="Rhea" id="RHEA-COMP:9684"/>
        <dbReference type="ChEBI" id="CHEBI:15377"/>
        <dbReference type="ChEBI" id="CHEBI:15378"/>
        <dbReference type="ChEBI" id="CHEBI:29985"/>
        <dbReference type="ChEBI" id="CHEBI:30616"/>
        <dbReference type="ChEBI" id="CHEBI:43474"/>
        <dbReference type="ChEBI" id="CHEBI:58359"/>
        <dbReference type="ChEBI" id="CHEBI:78520"/>
        <dbReference type="ChEBI" id="CHEBI:78521"/>
        <dbReference type="ChEBI" id="CHEBI:456216"/>
        <dbReference type="EC" id="6.3.5.7"/>
    </reaction>
</comment>
<comment type="subunit">
    <text evidence="1">Heterotrimer of A, B and C subunits.</text>
</comment>
<comment type="similarity">
    <text evidence="1">Belongs to the amidase family. GatA subfamily.</text>
</comment>
<dbReference type="EC" id="6.3.5.7" evidence="1"/>
<dbReference type="EMBL" id="AE017125">
    <property type="protein sequence ID" value="AAP77298.1"/>
    <property type="molecule type" value="Genomic_DNA"/>
</dbReference>
<dbReference type="RefSeq" id="WP_011115543.1">
    <property type="nucleotide sequence ID" value="NC_004917.1"/>
</dbReference>
<dbReference type="SMR" id="Q7VIA7"/>
<dbReference type="STRING" id="235279.HH_0701"/>
<dbReference type="KEGG" id="hhe:HH_0701"/>
<dbReference type="eggNOG" id="COG0154">
    <property type="taxonomic scope" value="Bacteria"/>
</dbReference>
<dbReference type="HOGENOM" id="CLU_009600_0_3_7"/>
<dbReference type="OrthoDB" id="9811471at2"/>
<dbReference type="Proteomes" id="UP000002495">
    <property type="component" value="Chromosome"/>
</dbReference>
<dbReference type="GO" id="GO:0030956">
    <property type="term" value="C:glutamyl-tRNA(Gln) amidotransferase complex"/>
    <property type="evidence" value="ECO:0007669"/>
    <property type="project" value="InterPro"/>
</dbReference>
<dbReference type="GO" id="GO:0005524">
    <property type="term" value="F:ATP binding"/>
    <property type="evidence" value="ECO:0007669"/>
    <property type="project" value="UniProtKB-KW"/>
</dbReference>
<dbReference type="GO" id="GO:0050567">
    <property type="term" value="F:glutaminyl-tRNA synthase (glutamine-hydrolyzing) activity"/>
    <property type="evidence" value="ECO:0007669"/>
    <property type="project" value="UniProtKB-UniRule"/>
</dbReference>
<dbReference type="GO" id="GO:0006412">
    <property type="term" value="P:translation"/>
    <property type="evidence" value="ECO:0007669"/>
    <property type="project" value="UniProtKB-UniRule"/>
</dbReference>
<dbReference type="Gene3D" id="3.90.1300.10">
    <property type="entry name" value="Amidase signature (AS) domain"/>
    <property type="match status" value="1"/>
</dbReference>
<dbReference type="HAMAP" id="MF_00120">
    <property type="entry name" value="GatA"/>
    <property type="match status" value="1"/>
</dbReference>
<dbReference type="InterPro" id="IPR000120">
    <property type="entry name" value="Amidase"/>
</dbReference>
<dbReference type="InterPro" id="IPR020556">
    <property type="entry name" value="Amidase_CS"/>
</dbReference>
<dbReference type="InterPro" id="IPR023631">
    <property type="entry name" value="Amidase_dom"/>
</dbReference>
<dbReference type="InterPro" id="IPR036928">
    <property type="entry name" value="AS_sf"/>
</dbReference>
<dbReference type="InterPro" id="IPR004412">
    <property type="entry name" value="GatA"/>
</dbReference>
<dbReference type="NCBIfam" id="TIGR00132">
    <property type="entry name" value="gatA"/>
    <property type="match status" value="1"/>
</dbReference>
<dbReference type="PANTHER" id="PTHR11895:SF151">
    <property type="entry name" value="GLUTAMYL-TRNA(GLN) AMIDOTRANSFERASE SUBUNIT A"/>
    <property type="match status" value="1"/>
</dbReference>
<dbReference type="PANTHER" id="PTHR11895">
    <property type="entry name" value="TRANSAMIDASE"/>
    <property type="match status" value="1"/>
</dbReference>
<dbReference type="Pfam" id="PF01425">
    <property type="entry name" value="Amidase"/>
    <property type="match status" value="1"/>
</dbReference>
<dbReference type="SUPFAM" id="SSF75304">
    <property type="entry name" value="Amidase signature (AS) enzymes"/>
    <property type="match status" value="1"/>
</dbReference>
<dbReference type="PROSITE" id="PS00571">
    <property type="entry name" value="AMIDASES"/>
    <property type="match status" value="1"/>
</dbReference>
<organism>
    <name type="scientific">Helicobacter hepaticus (strain ATCC 51449 / 3B1)</name>
    <dbReference type="NCBI Taxonomy" id="235279"/>
    <lineage>
        <taxon>Bacteria</taxon>
        <taxon>Pseudomonadati</taxon>
        <taxon>Campylobacterota</taxon>
        <taxon>Epsilonproteobacteria</taxon>
        <taxon>Campylobacterales</taxon>
        <taxon>Helicobacteraceae</taxon>
        <taxon>Helicobacter</taxon>
    </lineage>
</organism>
<feature type="chain" id="PRO_0000105165" description="Glutamyl-tRNA(Gln) amidotransferase subunit A">
    <location>
        <begin position="1"/>
        <end position="447"/>
    </location>
</feature>
<feature type="active site" description="Charge relay system" evidence="1">
    <location>
        <position position="51"/>
    </location>
</feature>
<feature type="active site" description="Charge relay system" evidence="1">
    <location>
        <position position="126"/>
    </location>
</feature>
<feature type="active site" description="Acyl-ester intermediate" evidence="1">
    <location>
        <position position="150"/>
    </location>
</feature>
<proteinExistence type="inferred from homology"/>